<accession>P11865</accession>
<accession>P76668</accession>
<accession>Q2M987</accession>
<organism>
    <name type="scientific">Escherichia coli (strain K12)</name>
    <dbReference type="NCBI Taxonomy" id="83333"/>
    <lineage>
        <taxon>Bacteria</taxon>
        <taxon>Pseudomonadati</taxon>
        <taxon>Pseudomonadota</taxon>
        <taxon>Gammaproteobacteria</taxon>
        <taxon>Enterobacterales</taxon>
        <taxon>Enterobacteriaceae</taxon>
        <taxon>Escherichia</taxon>
    </lineage>
</organism>
<reference key="1">
    <citation type="journal article" date="1989" name="Nucleic Acids Res.">
        <title>The complete nucleotide sequence of the tdc region of Escherichia coli.</title>
        <authorList>
            <person name="Schweizer H."/>
            <person name="Datta P."/>
        </authorList>
    </citation>
    <scope>NUCLEOTIDE SEQUENCE [GENOMIC DNA]</scope>
    <source>
        <strain>K12 / W3110 / ATCC 27325 / DSM 5911</strain>
    </source>
</reference>
<reference key="2">
    <citation type="journal article" date="1997" name="Science">
        <title>The complete genome sequence of Escherichia coli K-12.</title>
        <authorList>
            <person name="Blattner F.R."/>
            <person name="Plunkett G. III"/>
            <person name="Bloch C.A."/>
            <person name="Perna N.T."/>
            <person name="Burland V."/>
            <person name="Riley M."/>
            <person name="Collado-Vides J."/>
            <person name="Glasner J.D."/>
            <person name="Rode C.K."/>
            <person name="Mayhew G.F."/>
            <person name="Gregor J."/>
            <person name="Davis N.W."/>
            <person name="Kirkpatrick H.A."/>
            <person name="Goeden M.A."/>
            <person name="Rose D.J."/>
            <person name="Mau B."/>
            <person name="Shao Y."/>
        </authorList>
    </citation>
    <scope>NUCLEOTIDE SEQUENCE [LARGE SCALE GENOMIC DNA]</scope>
    <source>
        <strain>K12 / MG1655 / ATCC 47076</strain>
    </source>
</reference>
<reference key="3">
    <citation type="journal article" date="2006" name="Mol. Syst. Biol.">
        <title>Highly accurate genome sequences of Escherichia coli K-12 strains MG1655 and W3110.</title>
        <authorList>
            <person name="Hayashi K."/>
            <person name="Morooka N."/>
            <person name="Yamamoto Y."/>
            <person name="Fujita K."/>
            <person name="Isono K."/>
            <person name="Choi S."/>
            <person name="Ohtsubo E."/>
            <person name="Baba T."/>
            <person name="Wanner B.L."/>
            <person name="Mori H."/>
            <person name="Horiuchi T."/>
        </authorList>
    </citation>
    <scope>NUCLEOTIDE SEQUENCE [LARGE SCALE GENOMIC DNA]</scope>
    <source>
        <strain>K12 / W3110 / ATCC 27325 / DSM 5911</strain>
    </source>
</reference>
<evidence type="ECO:0000305" key="1"/>
<comment type="sequence caution" evidence="1">
    <conflict type="erroneous initiation">
        <sequence resource="EMBL-CDS" id="AAA57924"/>
    </conflict>
    <text>Extended N-terminus.</text>
</comment>
<sequence>MKGFPIAHIFHPSIPPMHAVVNNHNRNIDYWTVKRKFAEIVSTNDVNKIYSISNELRRVLSAITALNFYHGDVPSVMIRIQPENMSPFIIDISTGEHDDYIIQTLDVGTFAPFGEQCTCSAVNKKELECIKETISKYCAKFTRKEAILTPLVHFNKTSITSDCWQILFFSPDHFNNDFY</sequence>
<protein>
    <recommendedName>
        <fullName>Uncharacterized protein YhaB</fullName>
    </recommendedName>
</protein>
<feature type="chain" id="PRO_0000169441" description="Uncharacterized protein YhaB">
    <location>
        <begin position="1"/>
        <end position="179"/>
    </location>
</feature>
<name>YHAB_ECOLI</name>
<dbReference type="EMBL" id="X14430">
    <property type="protein sequence ID" value="CAA32590.1"/>
    <property type="molecule type" value="Genomic_DNA"/>
</dbReference>
<dbReference type="EMBL" id="X16445">
    <property type="protein sequence ID" value="CAA34465.1"/>
    <property type="molecule type" value="Genomic_DNA"/>
</dbReference>
<dbReference type="EMBL" id="U18997">
    <property type="protein sequence ID" value="AAA57924.1"/>
    <property type="status" value="ALT_INIT"/>
    <property type="molecule type" value="Genomic_DNA"/>
</dbReference>
<dbReference type="EMBL" id="U00096">
    <property type="protein sequence ID" value="AAC76155.2"/>
    <property type="molecule type" value="Genomic_DNA"/>
</dbReference>
<dbReference type="EMBL" id="AP009048">
    <property type="protein sequence ID" value="BAE77169.1"/>
    <property type="molecule type" value="Genomic_DNA"/>
</dbReference>
<dbReference type="PIR" id="E65101">
    <property type="entry name" value="Q3ECTR"/>
</dbReference>
<dbReference type="RefSeq" id="NP_417590.2">
    <property type="nucleotide sequence ID" value="NC_000913.3"/>
</dbReference>
<dbReference type="RefSeq" id="WP_000675733.1">
    <property type="nucleotide sequence ID" value="NZ_LN832404.1"/>
</dbReference>
<dbReference type="BioGRID" id="4259491">
    <property type="interactions" value="8"/>
</dbReference>
<dbReference type="FunCoup" id="P11865">
    <property type="interactions" value="219"/>
</dbReference>
<dbReference type="STRING" id="511145.b3120"/>
<dbReference type="PaxDb" id="511145-b3120"/>
<dbReference type="EnsemblBacteria" id="AAC76155">
    <property type="protein sequence ID" value="AAC76155"/>
    <property type="gene ID" value="b3120"/>
</dbReference>
<dbReference type="GeneID" id="947705"/>
<dbReference type="KEGG" id="ecj:JW3091"/>
<dbReference type="KEGG" id="eco:b3120"/>
<dbReference type="KEGG" id="ecoc:C3026_17015"/>
<dbReference type="PATRIC" id="fig|511145.12.peg.3214"/>
<dbReference type="EchoBASE" id="EB1160"/>
<dbReference type="HOGENOM" id="CLU_1452323_0_0_6"/>
<dbReference type="InParanoid" id="P11865"/>
<dbReference type="OMA" id="FGEQCIC"/>
<dbReference type="BioCyc" id="EcoCyc:EG11173-MONOMER"/>
<dbReference type="PRO" id="PR:P11865"/>
<dbReference type="Proteomes" id="UP000000625">
    <property type="component" value="Chromosome"/>
</dbReference>
<dbReference type="InterPro" id="IPR016420">
    <property type="entry name" value="UCP004546"/>
</dbReference>
<dbReference type="PIRSF" id="PIRSF004546">
    <property type="entry name" value="UCP004546"/>
    <property type="match status" value="1"/>
</dbReference>
<proteinExistence type="predicted"/>
<keyword id="KW-1185">Reference proteome</keyword>
<gene>
    <name type="primary">yhaB</name>
    <name type="ordered locus">b3120</name>
    <name type="ordered locus">JW3091</name>
</gene>